<accession>B2HV80</accession>
<sequence length="490" mass="53149">MSDVQVHQLYIHGRYVEATSGKTFNSINPANGEIIATLQQASEQDIEAAVKSAQQGQKIWAAMTAMERSRILRRAVDILRERNDELARLETLDTGKAYSETSTVDIVTGADVLEYYAGLATAIQGEQVPLRESSFFYTRREPLGVVAGIGAWNYPIQIALWKSAPALAAGNAMIFKPSETTPLTALKLAEIYTEAGLPDGVFNVVQGAGREIGQWLTEHPVIEKISFTGGVETGKKVMASAAGSTLKEVTMELGGKSPLIICEDADLNRAADIAVMANFFSSGQVCTNGTRVFVPKSRLADFEKAVVERVKRIRIGDPMAEDTNFGPLTSFPHMEKVLSFIESGKQQGAKVLIGGGRATEGELAKGAYVLPTVFSDCTDQMAIVQEEIFGPVMSILSYETEEEVIQRANDTTFGLAAGVVTQDISRAHRIIHQIEAGICWINTWGESPAEMPVGGYKQSGVGRENGLTTLGHYTRIKSIQVELGDYQSIF</sequence>
<evidence type="ECO:0000255" key="1">
    <source>
        <dbReference type="HAMAP-Rule" id="MF_00804"/>
    </source>
</evidence>
<gene>
    <name evidence="1" type="primary">betB</name>
    <name type="ordered locus">ACICU_00889</name>
</gene>
<protein>
    <recommendedName>
        <fullName evidence="1">Betaine aldehyde dehydrogenase</fullName>
        <shortName evidence="1">BADH</shortName>
        <ecNumber evidence="1">1.2.1.8</ecNumber>
    </recommendedName>
</protein>
<dbReference type="EC" id="1.2.1.8" evidence="1"/>
<dbReference type="EMBL" id="CP000863">
    <property type="protein sequence ID" value="ACC56201.1"/>
    <property type="molecule type" value="Genomic_DNA"/>
</dbReference>
<dbReference type="RefSeq" id="WP_001286303.1">
    <property type="nucleotide sequence ID" value="NZ_CP031380.1"/>
</dbReference>
<dbReference type="SMR" id="B2HV80"/>
<dbReference type="GeneID" id="92892890"/>
<dbReference type="KEGG" id="abc:ACICU_00889"/>
<dbReference type="HOGENOM" id="CLU_005391_0_0_6"/>
<dbReference type="UniPathway" id="UPA00529">
    <property type="reaction ID" value="UER00386"/>
</dbReference>
<dbReference type="Proteomes" id="UP000008839">
    <property type="component" value="Chromosome"/>
</dbReference>
<dbReference type="GO" id="GO:0008802">
    <property type="term" value="F:betaine-aldehyde dehydrogenase (NAD+) activity"/>
    <property type="evidence" value="ECO:0007669"/>
    <property type="project" value="UniProtKB-UniRule"/>
</dbReference>
<dbReference type="GO" id="GO:0046872">
    <property type="term" value="F:metal ion binding"/>
    <property type="evidence" value="ECO:0007669"/>
    <property type="project" value="UniProtKB-KW"/>
</dbReference>
<dbReference type="GO" id="GO:0019285">
    <property type="term" value="P:glycine betaine biosynthetic process from choline"/>
    <property type="evidence" value="ECO:0007669"/>
    <property type="project" value="UniProtKB-UniRule"/>
</dbReference>
<dbReference type="CDD" id="cd07090">
    <property type="entry name" value="ALDH_F9_TMBADH"/>
    <property type="match status" value="1"/>
</dbReference>
<dbReference type="FunFam" id="3.40.309.10:FF:000014">
    <property type="entry name" value="NAD/NADP-dependent betaine aldehyde dehydrogenase"/>
    <property type="match status" value="1"/>
</dbReference>
<dbReference type="FunFam" id="3.40.605.10:FF:000007">
    <property type="entry name" value="NAD/NADP-dependent betaine aldehyde dehydrogenase"/>
    <property type="match status" value="1"/>
</dbReference>
<dbReference type="Gene3D" id="3.40.605.10">
    <property type="entry name" value="Aldehyde Dehydrogenase, Chain A, domain 1"/>
    <property type="match status" value="1"/>
</dbReference>
<dbReference type="Gene3D" id="3.40.309.10">
    <property type="entry name" value="Aldehyde Dehydrogenase, Chain A, domain 2"/>
    <property type="match status" value="1"/>
</dbReference>
<dbReference type="HAMAP" id="MF_00804">
    <property type="entry name" value="BADH"/>
    <property type="match status" value="1"/>
</dbReference>
<dbReference type="InterPro" id="IPR016161">
    <property type="entry name" value="Ald_DH/histidinol_DH"/>
</dbReference>
<dbReference type="InterPro" id="IPR016163">
    <property type="entry name" value="Ald_DH_C"/>
</dbReference>
<dbReference type="InterPro" id="IPR016160">
    <property type="entry name" value="Ald_DH_CS_CYS"/>
</dbReference>
<dbReference type="InterPro" id="IPR029510">
    <property type="entry name" value="Ald_DH_CS_GLU"/>
</dbReference>
<dbReference type="InterPro" id="IPR016162">
    <property type="entry name" value="Ald_DH_N"/>
</dbReference>
<dbReference type="InterPro" id="IPR015590">
    <property type="entry name" value="Aldehyde_DH_dom"/>
</dbReference>
<dbReference type="InterPro" id="IPR011264">
    <property type="entry name" value="BADH"/>
</dbReference>
<dbReference type="NCBIfam" id="TIGR01804">
    <property type="entry name" value="BADH"/>
    <property type="match status" value="1"/>
</dbReference>
<dbReference type="NCBIfam" id="NF009725">
    <property type="entry name" value="PRK13252.1"/>
    <property type="match status" value="1"/>
</dbReference>
<dbReference type="PANTHER" id="PTHR11699">
    <property type="entry name" value="ALDEHYDE DEHYDROGENASE-RELATED"/>
    <property type="match status" value="1"/>
</dbReference>
<dbReference type="Pfam" id="PF00171">
    <property type="entry name" value="Aldedh"/>
    <property type="match status" value="1"/>
</dbReference>
<dbReference type="SUPFAM" id="SSF53720">
    <property type="entry name" value="ALDH-like"/>
    <property type="match status" value="1"/>
</dbReference>
<dbReference type="PROSITE" id="PS00070">
    <property type="entry name" value="ALDEHYDE_DEHYDR_CYS"/>
    <property type="match status" value="1"/>
</dbReference>
<dbReference type="PROSITE" id="PS00687">
    <property type="entry name" value="ALDEHYDE_DEHYDR_GLU"/>
    <property type="match status" value="1"/>
</dbReference>
<keyword id="KW-0479">Metal-binding</keyword>
<keyword id="KW-0520">NAD</keyword>
<keyword id="KW-0521">NADP</keyword>
<keyword id="KW-0558">Oxidation</keyword>
<keyword id="KW-0560">Oxidoreductase</keyword>
<keyword id="KW-0630">Potassium</keyword>
<name>BETB_ACIBC</name>
<reference key="1">
    <citation type="journal article" date="2008" name="Antimicrob. Agents Chemother.">
        <title>Whole-genome pyrosequencing of an epidemic multidrug-resistant Acinetobacter baumannii strain belonging to the European clone II group.</title>
        <authorList>
            <person name="Iacono M."/>
            <person name="Villa L."/>
            <person name="Fortini D."/>
            <person name="Bordoni R."/>
            <person name="Imperi F."/>
            <person name="Bonnal R.J."/>
            <person name="Sicheritz-Ponten T."/>
            <person name="De Bellis G."/>
            <person name="Visca P."/>
            <person name="Cassone A."/>
            <person name="Carattoli A."/>
        </authorList>
    </citation>
    <scope>NUCLEOTIDE SEQUENCE [LARGE SCALE GENOMIC DNA]</scope>
    <source>
        <strain>ACICU</strain>
    </source>
</reference>
<feature type="chain" id="PRO_1000133935" description="Betaine aldehyde dehydrogenase">
    <location>
        <begin position="1"/>
        <end position="490"/>
    </location>
</feature>
<feature type="active site" description="Charge relay system" evidence="1">
    <location>
        <position position="162"/>
    </location>
</feature>
<feature type="active site" description="Proton acceptor" evidence="1">
    <location>
        <position position="252"/>
    </location>
</feature>
<feature type="active site" description="Nucleophile" evidence="1">
    <location>
        <position position="286"/>
    </location>
</feature>
<feature type="active site" description="Charge relay system" evidence="1">
    <location>
        <position position="464"/>
    </location>
</feature>
<feature type="binding site" evidence="1">
    <location>
        <position position="26"/>
    </location>
    <ligand>
        <name>K(+)</name>
        <dbReference type="ChEBI" id="CHEBI:29103"/>
        <label>1</label>
    </ligand>
</feature>
<feature type="binding site" evidence="1">
    <location>
        <position position="27"/>
    </location>
    <ligand>
        <name>K(+)</name>
        <dbReference type="ChEBI" id="CHEBI:29103"/>
        <label>1</label>
    </ligand>
</feature>
<feature type="binding site" evidence="1">
    <location>
        <position position="93"/>
    </location>
    <ligand>
        <name>K(+)</name>
        <dbReference type="ChEBI" id="CHEBI:29103"/>
        <label>1</label>
    </ligand>
</feature>
<feature type="binding site" evidence="1">
    <location>
        <begin position="150"/>
        <end position="152"/>
    </location>
    <ligand>
        <name>NAD(+)</name>
        <dbReference type="ChEBI" id="CHEBI:57540"/>
    </ligand>
</feature>
<feature type="binding site" evidence="1">
    <location>
        <begin position="176"/>
        <end position="179"/>
    </location>
    <ligand>
        <name>NAD(+)</name>
        <dbReference type="ChEBI" id="CHEBI:57540"/>
    </ligand>
</feature>
<feature type="binding site" evidence="1">
    <location>
        <begin position="230"/>
        <end position="233"/>
    </location>
    <ligand>
        <name>NAD(+)</name>
        <dbReference type="ChEBI" id="CHEBI:57540"/>
    </ligand>
</feature>
<feature type="binding site" evidence="1">
    <location>
        <position position="246"/>
    </location>
    <ligand>
        <name>K(+)</name>
        <dbReference type="ChEBI" id="CHEBI:29103"/>
        <label>2</label>
    </ligand>
</feature>
<feature type="binding site" evidence="1">
    <location>
        <position position="254"/>
    </location>
    <ligand>
        <name>NAD(+)</name>
        <dbReference type="ChEBI" id="CHEBI:57540"/>
    </ligand>
</feature>
<feature type="binding site" description="covalent" evidence="1">
    <location>
        <position position="286"/>
    </location>
    <ligand>
        <name>NAD(+)</name>
        <dbReference type="ChEBI" id="CHEBI:57540"/>
    </ligand>
</feature>
<feature type="binding site" evidence="1">
    <location>
        <position position="387"/>
    </location>
    <ligand>
        <name>NAD(+)</name>
        <dbReference type="ChEBI" id="CHEBI:57540"/>
    </ligand>
</feature>
<feature type="binding site" evidence="1">
    <location>
        <position position="457"/>
    </location>
    <ligand>
        <name>K(+)</name>
        <dbReference type="ChEBI" id="CHEBI:29103"/>
        <label>2</label>
    </ligand>
</feature>
<feature type="binding site" evidence="1">
    <location>
        <position position="460"/>
    </location>
    <ligand>
        <name>K(+)</name>
        <dbReference type="ChEBI" id="CHEBI:29103"/>
        <label>2</label>
    </ligand>
</feature>
<feature type="site" description="Seems to be a necessary countercharge to the potassium cations" evidence="1">
    <location>
        <position position="248"/>
    </location>
</feature>
<feature type="modified residue" description="Cysteine sulfenic acid (-SOH)" evidence="1">
    <location>
        <position position="286"/>
    </location>
</feature>
<comment type="function">
    <text evidence="1">Involved in the biosynthesis of the osmoprotectant glycine betaine. Catalyzes the irreversible oxidation of betaine aldehyde to the corresponding acid.</text>
</comment>
<comment type="catalytic activity">
    <reaction evidence="1">
        <text>betaine aldehyde + NAD(+) + H2O = glycine betaine + NADH + 2 H(+)</text>
        <dbReference type="Rhea" id="RHEA:15305"/>
        <dbReference type="ChEBI" id="CHEBI:15377"/>
        <dbReference type="ChEBI" id="CHEBI:15378"/>
        <dbReference type="ChEBI" id="CHEBI:15710"/>
        <dbReference type="ChEBI" id="CHEBI:17750"/>
        <dbReference type="ChEBI" id="CHEBI:57540"/>
        <dbReference type="ChEBI" id="CHEBI:57945"/>
        <dbReference type="EC" id="1.2.1.8"/>
    </reaction>
    <physiologicalReaction direction="left-to-right" evidence="1">
        <dbReference type="Rhea" id="RHEA:15306"/>
    </physiologicalReaction>
</comment>
<comment type="cofactor">
    <cofactor evidence="1">
        <name>K(+)</name>
        <dbReference type="ChEBI" id="CHEBI:29103"/>
    </cofactor>
    <text evidence="1">Binds 2 potassium ions per subunit.</text>
</comment>
<comment type="pathway">
    <text evidence="1">Amine and polyamine biosynthesis; betaine biosynthesis via choline pathway; betaine from betaine aldehyde: step 1/1.</text>
</comment>
<comment type="subunit">
    <text evidence="1">Dimer of dimers.</text>
</comment>
<comment type="similarity">
    <text evidence="1">Belongs to the aldehyde dehydrogenase family.</text>
</comment>
<proteinExistence type="inferred from homology"/>
<organism>
    <name type="scientific">Acinetobacter baumannii (strain ACICU)</name>
    <dbReference type="NCBI Taxonomy" id="405416"/>
    <lineage>
        <taxon>Bacteria</taxon>
        <taxon>Pseudomonadati</taxon>
        <taxon>Pseudomonadota</taxon>
        <taxon>Gammaproteobacteria</taxon>
        <taxon>Moraxellales</taxon>
        <taxon>Moraxellaceae</taxon>
        <taxon>Acinetobacter</taxon>
        <taxon>Acinetobacter calcoaceticus/baumannii complex</taxon>
    </lineage>
</organism>